<dbReference type="EC" id="2.5.1.6" evidence="5"/>
<dbReference type="EMBL" id="Z71271">
    <property type="protein sequence ID" value="CAA95856.1"/>
    <property type="molecule type" value="mRNA"/>
</dbReference>
<dbReference type="SMR" id="Q96551"/>
<dbReference type="BRENDA" id="2.5.1.6">
    <property type="organism ID" value="1211"/>
</dbReference>
<dbReference type="UniPathway" id="UPA00315">
    <property type="reaction ID" value="UER00080"/>
</dbReference>
<dbReference type="GO" id="GO:0005737">
    <property type="term" value="C:cytoplasm"/>
    <property type="evidence" value="ECO:0007669"/>
    <property type="project" value="UniProtKB-SubCell"/>
</dbReference>
<dbReference type="GO" id="GO:0005524">
    <property type="term" value="F:ATP binding"/>
    <property type="evidence" value="ECO:0007669"/>
    <property type="project" value="UniProtKB-KW"/>
</dbReference>
<dbReference type="GO" id="GO:0046872">
    <property type="term" value="F:metal ion binding"/>
    <property type="evidence" value="ECO:0007669"/>
    <property type="project" value="UniProtKB-KW"/>
</dbReference>
<dbReference type="GO" id="GO:0004478">
    <property type="term" value="F:methionine adenosyltransferase activity"/>
    <property type="evidence" value="ECO:0007669"/>
    <property type="project" value="UniProtKB-EC"/>
</dbReference>
<dbReference type="GO" id="GO:0006730">
    <property type="term" value="P:one-carbon metabolic process"/>
    <property type="evidence" value="ECO:0007669"/>
    <property type="project" value="UniProtKB-KW"/>
</dbReference>
<dbReference type="GO" id="GO:0006556">
    <property type="term" value="P:S-adenosylmethionine biosynthetic process"/>
    <property type="evidence" value="ECO:0007669"/>
    <property type="project" value="UniProtKB-UniPathway"/>
</dbReference>
<dbReference type="CDD" id="cd18079">
    <property type="entry name" value="S-AdoMet_synt"/>
    <property type="match status" value="1"/>
</dbReference>
<dbReference type="FunFam" id="3.30.300.10:FF:000003">
    <property type="entry name" value="S-adenosylmethionine synthase"/>
    <property type="match status" value="1"/>
</dbReference>
<dbReference type="FunFam" id="3.30.300.10:FF:000004">
    <property type="entry name" value="S-adenosylmethionine synthase"/>
    <property type="match status" value="1"/>
</dbReference>
<dbReference type="FunFam" id="3.30.300.10:FF:000011">
    <property type="entry name" value="S-adenosylmethionine synthase"/>
    <property type="match status" value="1"/>
</dbReference>
<dbReference type="FunFam" id="3.30.300.10:FF:000021">
    <property type="entry name" value="S-adenosylmethionine synthetase 1"/>
    <property type="match status" value="1"/>
</dbReference>
<dbReference type="Gene3D" id="3.30.300.10">
    <property type="match status" value="3"/>
</dbReference>
<dbReference type="HAMAP" id="MF_00086">
    <property type="entry name" value="S_AdoMet_synth1"/>
    <property type="match status" value="1"/>
</dbReference>
<dbReference type="InterPro" id="IPR022631">
    <property type="entry name" value="ADOMET_SYNTHASE_CS"/>
</dbReference>
<dbReference type="InterPro" id="IPR022630">
    <property type="entry name" value="S-AdoMet_synt_C"/>
</dbReference>
<dbReference type="InterPro" id="IPR022629">
    <property type="entry name" value="S-AdoMet_synt_central"/>
</dbReference>
<dbReference type="InterPro" id="IPR022628">
    <property type="entry name" value="S-AdoMet_synt_N"/>
</dbReference>
<dbReference type="InterPro" id="IPR002133">
    <property type="entry name" value="S-AdoMet_synthetase"/>
</dbReference>
<dbReference type="InterPro" id="IPR022636">
    <property type="entry name" value="S-AdoMet_synthetase_sfam"/>
</dbReference>
<dbReference type="NCBIfam" id="TIGR01034">
    <property type="entry name" value="metK"/>
    <property type="match status" value="1"/>
</dbReference>
<dbReference type="PANTHER" id="PTHR11964">
    <property type="entry name" value="S-ADENOSYLMETHIONINE SYNTHETASE"/>
    <property type="match status" value="1"/>
</dbReference>
<dbReference type="Pfam" id="PF02773">
    <property type="entry name" value="S-AdoMet_synt_C"/>
    <property type="match status" value="1"/>
</dbReference>
<dbReference type="Pfam" id="PF02772">
    <property type="entry name" value="S-AdoMet_synt_M"/>
    <property type="match status" value="1"/>
</dbReference>
<dbReference type="Pfam" id="PF00438">
    <property type="entry name" value="S-AdoMet_synt_N"/>
    <property type="match status" value="1"/>
</dbReference>
<dbReference type="PIRSF" id="PIRSF000497">
    <property type="entry name" value="MAT"/>
    <property type="match status" value="1"/>
</dbReference>
<dbReference type="SUPFAM" id="SSF55973">
    <property type="entry name" value="S-adenosylmethionine synthetase"/>
    <property type="match status" value="3"/>
</dbReference>
<dbReference type="PROSITE" id="PS00376">
    <property type="entry name" value="ADOMET_SYNTHASE_1"/>
    <property type="match status" value="1"/>
</dbReference>
<dbReference type="PROSITE" id="PS00377">
    <property type="entry name" value="ADOMET_SYNTHASE_2"/>
    <property type="match status" value="1"/>
</dbReference>
<feature type="chain" id="PRO_0000174459" description="S-adenosylmethionine synthase 1">
    <location>
        <begin position="1"/>
        <end position="393"/>
    </location>
</feature>
<feature type="binding site" evidence="3">
    <location>
        <position position="9"/>
    </location>
    <ligand>
        <name>Mg(2+)</name>
        <dbReference type="ChEBI" id="CHEBI:18420"/>
    </ligand>
</feature>
<feature type="binding site" description="in other chain" evidence="4">
    <location>
        <position position="15"/>
    </location>
    <ligand>
        <name>ATP</name>
        <dbReference type="ChEBI" id="CHEBI:30616"/>
        <note>ligand shared between two neighboring subunits</note>
    </ligand>
</feature>
<feature type="binding site" evidence="2">
    <location>
        <position position="43"/>
    </location>
    <ligand>
        <name>K(+)</name>
        <dbReference type="ChEBI" id="CHEBI:29103"/>
    </ligand>
</feature>
<feature type="binding site" description="in other chain" evidence="2">
    <location>
        <position position="56"/>
    </location>
    <ligand>
        <name>L-methionine</name>
        <dbReference type="ChEBI" id="CHEBI:57844"/>
        <note>ligand shared between two neighboring subunits</note>
    </ligand>
</feature>
<feature type="binding site" description="in other chain" evidence="2">
    <location>
        <position position="99"/>
    </location>
    <ligand>
        <name>L-methionine</name>
        <dbReference type="ChEBI" id="CHEBI:57844"/>
        <note>ligand shared between two neighboring subunits</note>
    </ligand>
</feature>
<feature type="binding site" description="in other chain" evidence="4">
    <location>
        <begin position="167"/>
        <end position="169"/>
    </location>
    <ligand>
        <name>ATP</name>
        <dbReference type="ChEBI" id="CHEBI:30616"/>
        <note>ligand shared between two neighboring subunits</note>
    </ligand>
</feature>
<feature type="binding site" description="in other chain" evidence="4">
    <location>
        <begin position="235"/>
        <end position="238"/>
    </location>
    <ligand>
        <name>ATP</name>
        <dbReference type="ChEBI" id="CHEBI:30616"/>
        <note>ligand shared between two neighboring subunits</note>
    </ligand>
</feature>
<feature type="binding site" description="in other chain" evidence="4">
    <location>
        <position position="246"/>
    </location>
    <ligand>
        <name>ATP</name>
        <dbReference type="ChEBI" id="CHEBI:30616"/>
        <note>ligand shared between two neighboring subunits</note>
    </ligand>
</feature>
<feature type="binding site" evidence="2">
    <location>
        <position position="246"/>
    </location>
    <ligand>
        <name>L-methionine</name>
        <dbReference type="ChEBI" id="CHEBI:57844"/>
        <note>ligand shared between two neighboring subunits</note>
    </ligand>
</feature>
<feature type="binding site" description="in other chain" evidence="2">
    <location>
        <begin position="252"/>
        <end position="253"/>
    </location>
    <ligand>
        <name>ATP</name>
        <dbReference type="ChEBI" id="CHEBI:30616"/>
        <note>ligand shared between two neighboring subunits</note>
    </ligand>
</feature>
<feature type="binding site" evidence="2">
    <location>
        <position position="269"/>
    </location>
    <ligand>
        <name>ATP</name>
        <dbReference type="ChEBI" id="CHEBI:30616"/>
        <note>ligand shared between two neighboring subunits</note>
    </ligand>
</feature>
<feature type="binding site" evidence="2">
    <location>
        <position position="273"/>
    </location>
    <ligand>
        <name>ATP</name>
        <dbReference type="ChEBI" id="CHEBI:30616"/>
        <note>ligand shared between two neighboring subunits</note>
    </ligand>
</feature>
<feature type="binding site" evidence="3">
    <location>
        <position position="277"/>
    </location>
    <ligand>
        <name>ATP</name>
        <dbReference type="ChEBI" id="CHEBI:30616"/>
        <note>ligand shared between two neighboring subunits</note>
    </ligand>
</feature>
<feature type="binding site" description="in other chain" evidence="2">
    <location>
        <position position="277"/>
    </location>
    <ligand>
        <name>L-methionine</name>
        <dbReference type="ChEBI" id="CHEBI:57844"/>
        <note>ligand shared between two neighboring subunits</note>
    </ligand>
</feature>
<name>METK1_CATRO</name>
<protein>
    <recommendedName>
        <fullName>S-adenosylmethionine synthase 1</fullName>
        <shortName>AdoMet synthase 1</shortName>
        <ecNumber evidence="5">2.5.1.6</ecNumber>
    </recommendedName>
    <alternativeName>
        <fullName>Methionine adenosyltransferase 1</fullName>
        <shortName>MAT 1</shortName>
    </alternativeName>
</protein>
<keyword id="KW-0067">ATP-binding</keyword>
<keyword id="KW-0170">Cobalt</keyword>
<keyword id="KW-0963">Cytoplasm</keyword>
<keyword id="KW-0460">Magnesium</keyword>
<keyword id="KW-0464">Manganese</keyword>
<keyword id="KW-0479">Metal-binding</keyword>
<keyword id="KW-0547">Nucleotide-binding</keyword>
<keyword id="KW-0554">One-carbon metabolism</keyword>
<keyword id="KW-0630">Potassium</keyword>
<keyword id="KW-0808">Transferase</keyword>
<comment type="function">
    <text evidence="5">Catalyzes the formation of S-adenosylmethionine from methionine and ATP. The reaction comprises two steps that are both catalyzed by the same enzyme: formation of S-adenosylmethionine (AdoMet) and triphosphate, and subsequent hydrolysis of the triphosphate.</text>
</comment>
<comment type="catalytic activity">
    <reaction evidence="5">
        <text>L-methionine + ATP + H2O = S-adenosyl-L-methionine + phosphate + diphosphate</text>
        <dbReference type="Rhea" id="RHEA:21080"/>
        <dbReference type="ChEBI" id="CHEBI:15377"/>
        <dbReference type="ChEBI" id="CHEBI:30616"/>
        <dbReference type="ChEBI" id="CHEBI:33019"/>
        <dbReference type="ChEBI" id="CHEBI:43474"/>
        <dbReference type="ChEBI" id="CHEBI:57844"/>
        <dbReference type="ChEBI" id="CHEBI:59789"/>
        <dbReference type="EC" id="2.5.1.6"/>
    </reaction>
</comment>
<comment type="cofactor">
    <cofactor evidence="5">
        <name>Mn(2+)</name>
        <dbReference type="ChEBI" id="CHEBI:29035"/>
    </cofactor>
    <cofactor evidence="5">
        <name>Mg(2+)</name>
        <dbReference type="ChEBI" id="CHEBI:18420"/>
    </cofactor>
    <cofactor evidence="5">
        <name>Co(2+)</name>
        <dbReference type="ChEBI" id="CHEBI:48828"/>
    </cofactor>
    <text evidence="3 5">Binds 2 divalent ions per subunit. The metal ions interact primarily with the substrate (By similarity). Can utilize magnesium, manganese or cobalt (in vitro) (PubMed:9037140).</text>
</comment>
<comment type="cofactor">
    <cofactor evidence="5">
        <name>K(+)</name>
        <dbReference type="ChEBI" id="CHEBI:29103"/>
    </cofactor>
    <cofactor evidence="5">
        <name>NH4(+)</name>
        <dbReference type="ChEBI" id="CHEBI:28938"/>
    </cofactor>
    <text evidence="3 5">Binds 1 potassium ion per subunit. The potassium ion interacts primarily with the substrate (By similarity). Potassium can be replaced by NH(4) (in vitro) (PubMed:9037140).</text>
</comment>
<comment type="activity regulation">
    <text evidence="5">Inhibited by products of SAMS reaction (SAM, Pi, PPi), substrate analogs (cycloleucine and ethionine), and alternative nucleotides (GTP, CTP and ADP). Strongly repressed by PPPi.</text>
</comment>
<comment type="biophysicochemical properties">
    <kinetics>
        <KM evidence="5">104 uM for L-methionine</KM>
        <KM evidence="5">252 uM for ATP</KM>
    </kinetics>
    <phDependence>
        <text evidence="5">Optimum pH is 7-8.3.</text>
    </phDependence>
    <temperatureDependence>
        <text evidence="5">Optimum temperature is 37-45 degrees Celsius.</text>
    </temperatureDependence>
</comment>
<comment type="pathway">
    <text evidence="5">Amino-acid biosynthesis; S-adenosyl-L-methionine biosynthesis; S-adenosyl-L-methionine from L-methionine: step 1/1.</text>
</comment>
<comment type="subunit">
    <text evidence="1">Homotetramer.</text>
</comment>
<comment type="subcellular location">
    <subcellularLocation>
        <location evidence="1">Cytoplasm</location>
    </subcellularLocation>
</comment>
<comment type="tissue specificity">
    <text evidence="5">Mostly expressed in roots, and, to a lower extent, in hypocotyls and cotyledons.</text>
</comment>
<comment type="induction">
    <text evidence="5">Strongly induced by elicitors from Phytophthora megasperma. Transiently activated by salt stress,.</text>
</comment>
<comment type="similarity">
    <text evidence="6">Belongs to the AdoMet synthase family.</text>
</comment>
<gene>
    <name type="primary">SAMS1</name>
</gene>
<accession>Q96551</accession>
<proteinExistence type="evidence at protein level"/>
<sequence>METFLFTSESVNEGHPDKLCDQISDAVLDACLEQDPDSKVACETCTKTNMVMVFGEITTKATVDYEKIVRDTCRSIGFVSDDVGLDADNCKVLVNIEQQSPDIAQGVHGHLTKRPEEIGAGDQGHMFGYATDETPEFMPLSHVLATKLGARLTEVRKNGTCPWLRPDGKTQVTVEYYNENGAMVPVRVHTVVISTQHDETVTNDQIAADLKEHVIKPVIPEKYLDERTIFHLNPSGRFVIGGPHGDAGLTGRKIIIDTYGGWGAHGGGAFSGKDPTKVDRSGAYIVRQAAKSIVANGLARRCIVQVSYAIGVPEPLSVFVDTYGTGKIPDKEILKIVKENFDFRPGMIAINLDLKRGGSGRFLKTAAYGHFGRDDPDFTWEVVKPLKWEKAAN</sequence>
<reference key="1">
    <citation type="journal article" date="1997" name="Plant Mol. Biol.">
        <title>Three differentially expressed S-adenosylmethionine synthetases from Catharanthus roseus: molecular and functional characterization.</title>
        <authorList>
            <person name="Schroeder G."/>
            <person name="Eichel J."/>
            <person name="Breinig S."/>
            <person name="Schroeder J."/>
        </authorList>
    </citation>
    <scope>NUCLEOTIDE SEQUENCE [MRNA]</scope>
    <scope>FUNCTION</scope>
    <scope>CATALYTIC ACTIVITY</scope>
    <scope>COFACTOR</scope>
    <scope>BIOPHYSICOCHEMICAL PROPERTIES</scope>
    <scope>ACTIVITY REGULATION</scope>
    <scope>PATHWAY</scope>
    <scope>TISSUE SPECIFICITY</scope>
    <scope>INDUCTION</scope>
</reference>
<organism>
    <name type="scientific">Catharanthus roseus</name>
    <name type="common">Madagascar periwinkle</name>
    <name type="synonym">Vinca rosea</name>
    <dbReference type="NCBI Taxonomy" id="4058"/>
    <lineage>
        <taxon>Eukaryota</taxon>
        <taxon>Viridiplantae</taxon>
        <taxon>Streptophyta</taxon>
        <taxon>Embryophyta</taxon>
        <taxon>Tracheophyta</taxon>
        <taxon>Spermatophyta</taxon>
        <taxon>Magnoliopsida</taxon>
        <taxon>eudicotyledons</taxon>
        <taxon>Gunneridae</taxon>
        <taxon>Pentapetalae</taxon>
        <taxon>asterids</taxon>
        <taxon>lamiids</taxon>
        <taxon>Gentianales</taxon>
        <taxon>Apocynaceae</taxon>
        <taxon>Rauvolfioideae</taxon>
        <taxon>Vinceae</taxon>
        <taxon>Catharanthinae</taxon>
        <taxon>Catharanthus</taxon>
    </lineage>
</organism>
<evidence type="ECO:0000250" key="1"/>
<evidence type="ECO:0000250" key="2">
    <source>
        <dbReference type="UniProtKB" id="P0A817"/>
    </source>
</evidence>
<evidence type="ECO:0000250" key="3">
    <source>
        <dbReference type="UniProtKB" id="P13444"/>
    </source>
</evidence>
<evidence type="ECO:0000250" key="4">
    <source>
        <dbReference type="UniProtKB" id="Q00266"/>
    </source>
</evidence>
<evidence type="ECO:0000269" key="5">
    <source>
    </source>
</evidence>
<evidence type="ECO:0000305" key="6"/>